<accession>Q57154</accession>
<accession>Q60231</accession>
<dbReference type="EMBL" id="AP001918">
    <property type="protein sequence ID" value="BAA97903.1"/>
    <property type="molecule type" value="Genomic_DNA"/>
</dbReference>
<dbReference type="EMBL" id="L01255">
    <property type="protein sequence ID" value="AAA71885.1"/>
    <property type="molecule type" value="Unassigned_DNA"/>
</dbReference>
<dbReference type="EMBL" id="L01256">
    <property type="protein sequence ID" value="AAA71886.1"/>
    <property type="molecule type" value="Unassigned_DNA"/>
</dbReference>
<dbReference type="EMBL" id="M26308">
    <property type="protein sequence ID" value="AAB61762.1"/>
    <property type="status" value="ALT_INIT"/>
    <property type="molecule type" value="Genomic_DNA"/>
</dbReference>
<dbReference type="PIR" id="I40829">
    <property type="entry name" value="I40829"/>
</dbReference>
<dbReference type="RefSeq" id="NP_061412.1">
    <property type="nucleotide sequence ID" value="NC_002483.1"/>
</dbReference>
<dbReference type="RefSeq" id="WP_000361610.1">
    <property type="nucleotide sequence ID" value="NZ_STEB01000058.1"/>
</dbReference>
<dbReference type="KEGG" id="ecoc:C3026_24280"/>
<dbReference type="PRO" id="PR:Q57154"/>
<dbReference type="GO" id="GO:0003677">
    <property type="term" value="F:DNA binding"/>
    <property type="evidence" value="ECO:0007669"/>
    <property type="project" value="UniProtKB-KW"/>
</dbReference>
<dbReference type="GO" id="GO:0003887">
    <property type="term" value="F:DNA-directed DNA polymerase activity"/>
    <property type="evidence" value="ECO:0007669"/>
    <property type="project" value="InterPro"/>
</dbReference>
<dbReference type="GO" id="GO:0006270">
    <property type="term" value="P:DNA replication initiation"/>
    <property type="evidence" value="ECO:0007669"/>
    <property type="project" value="InterPro"/>
</dbReference>
<dbReference type="GO" id="GO:0006276">
    <property type="term" value="P:plasmid maintenance"/>
    <property type="evidence" value="ECO:0007669"/>
    <property type="project" value="UniProtKB-KW"/>
</dbReference>
<dbReference type="Gene3D" id="1.10.10.10">
    <property type="entry name" value="Winged helix-like DNA-binding domain superfamily/Winged helix DNA-binding domain"/>
    <property type="match status" value="1"/>
</dbReference>
<dbReference type="InterPro" id="IPR000525">
    <property type="entry name" value="Initiator_Rep_WH1"/>
</dbReference>
<dbReference type="InterPro" id="IPR036388">
    <property type="entry name" value="WH-like_DNA-bd_sf"/>
</dbReference>
<dbReference type="Pfam" id="PF01051">
    <property type="entry name" value="Rep3_N"/>
    <property type="match status" value="1"/>
</dbReference>
<name>REPB_ECOLI</name>
<feature type="chain" id="PRO_0000068302" description="RepFIB replication protein A">
    <location>
        <begin position="1"/>
        <end position="325"/>
    </location>
</feature>
<feature type="region of interest" description="Disordered" evidence="1">
    <location>
        <begin position="279"/>
        <end position="298"/>
    </location>
</feature>
<feature type="sequence variant" description="In copy number mutant.">
    <original>A</original>
    <variation>D</variation>
    <location>
        <position position="60"/>
    </location>
</feature>
<protein>
    <recommendedName>
        <fullName>RepFIB replication protein A</fullName>
    </recommendedName>
</protein>
<organism>
    <name type="scientific">Escherichia coli (strain K12)</name>
    <dbReference type="NCBI Taxonomy" id="83333"/>
    <lineage>
        <taxon>Bacteria</taxon>
        <taxon>Pseudomonadati</taxon>
        <taxon>Pseudomonadota</taxon>
        <taxon>Gammaproteobacteria</taxon>
        <taxon>Enterobacterales</taxon>
        <taxon>Enterobacteriaceae</taxon>
        <taxon>Escherichia</taxon>
    </lineage>
</organism>
<sequence>MDKSSGELVTLTPNNNNTVQPVALMRLGVFVPTLKSLKNSKKNTLSRTDATEELTRLSLARAEGFDKVEITGPRLDMDNDFKTWVGIIHSFARHNVIGDKVELPFVEFAKLCGIPSSQSSRRLRERISPSLKRIAGTVISFSRTDEKHTREYITHLVQSAYYDTERDIVQLQADPRLFELYQFDRKVLLQLKAINALKRRESAQALYTFIESLPRDPAPISLARLRARLNLKSPVFSQNQTVRRAMEQLREIGYLDYTEIQRGRTKFFCIHYRRPRLKAPNDESKENPLPPSPAEKVSPEMAEKLALLEKLGITLDDLEKLFKSR</sequence>
<gene>
    <name type="primary">repB</name>
    <name type="synonym">repA</name>
    <name type="ordered locus">ECOK12F033</name>
</gene>
<evidence type="ECO:0000256" key="1">
    <source>
        <dbReference type="SAM" id="MobiDB-lite"/>
    </source>
</evidence>
<evidence type="ECO:0000305" key="2"/>
<proteinExistence type="evidence at protein level"/>
<keyword id="KW-0235">DNA replication</keyword>
<keyword id="KW-0238">DNA-binding</keyword>
<keyword id="KW-0614">Plasmid</keyword>
<keyword id="KW-0615">Plasmid copy control</keyword>
<reference key="1">
    <citation type="submission" date="2000-04" db="EMBL/GenBank/DDBJ databases">
        <title>Complete nucleotide sequence of the F plasmid: its implications for organization and diversification of plasmid genomes.</title>
        <authorList>
            <person name="Shimizu H."/>
            <person name="Saitoh Y."/>
            <person name="Suda Y."/>
            <person name="Uehara K."/>
            <person name="Sampei G."/>
            <person name="Mizobuchi K."/>
        </authorList>
    </citation>
    <scope>NUCLEOTIDE SEQUENCE [LARGE SCALE GENOMIC DNA]</scope>
    <source>
        <strain>K12 / CR63</strain>
        <plasmid>F</plasmid>
    </source>
</reference>
<reference key="2">
    <citation type="journal article" date="1993" name="Plasmid">
        <title>RepFIB: a basic replicon of large plasmids.</title>
        <authorList>
            <person name="Gibbs M.D."/>
            <person name="Spiers A.J."/>
            <person name="Bergquist P.L."/>
        </authorList>
    </citation>
    <scope>NUCLEOTIDE SEQUENCE [GENOMIC DNA]</scope>
    <source>
        <plasmid>IncFI ColVBtrp</plasmid>
        <plasmid>IncFI pHH502</plasmid>
    </source>
</reference>
<reference key="3">
    <citation type="journal article" date="1989" name="J. Bacteriol.">
        <title>Nucleotide sequence and replication characteristics of RepFIB, a basic replicon of IncF plasmids.</title>
        <authorList>
            <person name="Saul D."/>
            <person name="Spiers A.J."/>
            <person name="McAnulty J."/>
            <person name="Gibbs M.G."/>
            <person name="Bergquist P.L."/>
            <person name="Hill D.F."/>
        </authorList>
    </citation>
    <scope>NUCLEOTIDE SEQUENCE [GENOMIC DNA]</scope>
    <source>
        <plasmid>IncFI P307</plasmid>
    </source>
</reference>
<reference key="4">
    <citation type="journal article" date="1993" name="J. Bacteriol.">
        <title>Regulatory interactions between RepA, an essential replication protein, and the DNA repeats of RepFIB from plasmid P307.</title>
        <authorList>
            <person name="Spiers A.J."/>
            <person name="Bhana N."/>
            <person name="Bergquist P.L."/>
        </authorList>
    </citation>
    <scope>EXPRESSION REGULATION</scope>
    <scope>DNA REPEAT ELEMENT BINDING</scope>
</reference>
<comment type="function">
    <text>This protein is essential for plasmid replication; it is involved in copy control functions. In vitro, binds to the DNA repeat units, BCDD'D'', EFG and HIJ.</text>
</comment>
<comment type="similarity">
    <text evidence="2">Belongs to the initiator RepB protein family.</text>
</comment>
<comment type="sequence caution" evidence="2">
    <conflict type="erroneous initiation">
        <sequence resource="EMBL-CDS" id="AAB61762"/>
    </conflict>
</comment>
<geneLocation type="plasmid">
    <name>F</name>
</geneLocation>
<geneLocation type="plasmid">
    <name>IncFI P307</name>
</geneLocation>
<geneLocation type="plasmid">
    <name>IncFI pHH502</name>
</geneLocation>
<geneLocation type="plasmid">
    <name>IncFI ColVBtrp</name>
</geneLocation>